<protein>
    <recommendedName>
        <fullName evidence="1">Large ribosomal subunit protein bL20</fullName>
    </recommendedName>
    <alternativeName>
        <fullName evidence="2">50S ribosomal protein L20</fullName>
    </alternativeName>
</protein>
<evidence type="ECO:0000255" key="1">
    <source>
        <dbReference type="HAMAP-Rule" id="MF_00382"/>
    </source>
</evidence>
<evidence type="ECO:0000305" key="2"/>
<comment type="function">
    <text evidence="1">Binds directly to 23S ribosomal RNA and is necessary for the in vitro assembly process of the 50S ribosomal subunit. It is not involved in the protein synthesizing functions of that subunit.</text>
</comment>
<comment type="similarity">
    <text evidence="1">Belongs to the bacterial ribosomal protein bL20 family.</text>
</comment>
<organism>
    <name type="scientific">Pelotomaculum thermopropionicum (strain DSM 13744 / JCM 10971 / SI)</name>
    <dbReference type="NCBI Taxonomy" id="370438"/>
    <lineage>
        <taxon>Bacteria</taxon>
        <taxon>Bacillati</taxon>
        <taxon>Bacillota</taxon>
        <taxon>Clostridia</taxon>
        <taxon>Eubacteriales</taxon>
        <taxon>Desulfotomaculaceae</taxon>
        <taxon>Pelotomaculum</taxon>
    </lineage>
</organism>
<sequence length="117" mass="13424">MPRAKSSVVSRKRHKKILKLAKGYRGAKSKLYRIANQQVMKSLVYAYRDRKARKRDFRKLWITRINAAARMNGISYSRLMNGLKLAGVDINRKMLADMAVNDAQAFGRLVEIAKAKL</sequence>
<dbReference type="EMBL" id="AP009389">
    <property type="protein sequence ID" value="BAF60134.1"/>
    <property type="molecule type" value="Genomic_DNA"/>
</dbReference>
<dbReference type="SMR" id="A5D0U4"/>
<dbReference type="STRING" id="370438.PTH_1953"/>
<dbReference type="KEGG" id="pth:PTH_1953"/>
<dbReference type="eggNOG" id="COG0292">
    <property type="taxonomic scope" value="Bacteria"/>
</dbReference>
<dbReference type="HOGENOM" id="CLU_123265_0_1_9"/>
<dbReference type="Proteomes" id="UP000006556">
    <property type="component" value="Chromosome"/>
</dbReference>
<dbReference type="GO" id="GO:1990904">
    <property type="term" value="C:ribonucleoprotein complex"/>
    <property type="evidence" value="ECO:0007669"/>
    <property type="project" value="UniProtKB-KW"/>
</dbReference>
<dbReference type="GO" id="GO:0005840">
    <property type="term" value="C:ribosome"/>
    <property type="evidence" value="ECO:0007669"/>
    <property type="project" value="UniProtKB-KW"/>
</dbReference>
<dbReference type="GO" id="GO:0019843">
    <property type="term" value="F:rRNA binding"/>
    <property type="evidence" value="ECO:0007669"/>
    <property type="project" value="UniProtKB-UniRule"/>
</dbReference>
<dbReference type="GO" id="GO:0003735">
    <property type="term" value="F:structural constituent of ribosome"/>
    <property type="evidence" value="ECO:0007669"/>
    <property type="project" value="InterPro"/>
</dbReference>
<dbReference type="GO" id="GO:0000027">
    <property type="term" value="P:ribosomal large subunit assembly"/>
    <property type="evidence" value="ECO:0007669"/>
    <property type="project" value="UniProtKB-UniRule"/>
</dbReference>
<dbReference type="GO" id="GO:0006412">
    <property type="term" value="P:translation"/>
    <property type="evidence" value="ECO:0007669"/>
    <property type="project" value="InterPro"/>
</dbReference>
<dbReference type="CDD" id="cd07026">
    <property type="entry name" value="Ribosomal_L20"/>
    <property type="match status" value="1"/>
</dbReference>
<dbReference type="FunFam" id="1.10.1900.20:FF:000001">
    <property type="entry name" value="50S ribosomal protein L20"/>
    <property type="match status" value="1"/>
</dbReference>
<dbReference type="Gene3D" id="6.10.160.10">
    <property type="match status" value="1"/>
</dbReference>
<dbReference type="Gene3D" id="1.10.1900.20">
    <property type="entry name" value="Ribosomal protein L20"/>
    <property type="match status" value="1"/>
</dbReference>
<dbReference type="HAMAP" id="MF_00382">
    <property type="entry name" value="Ribosomal_bL20"/>
    <property type="match status" value="1"/>
</dbReference>
<dbReference type="InterPro" id="IPR005813">
    <property type="entry name" value="Ribosomal_bL20"/>
</dbReference>
<dbReference type="InterPro" id="IPR049946">
    <property type="entry name" value="RIBOSOMAL_L20_CS"/>
</dbReference>
<dbReference type="InterPro" id="IPR035566">
    <property type="entry name" value="Ribosomal_protein_bL20_C"/>
</dbReference>
<dbReference type="NCBIfam" id="TIGR01032">
    <property type="entry name" value="rplT_bact"/>
    <property type="match status" value="1"/>
</dbReference>
<dbReference type="PANTHER" id="PTHR10986">
    <property type="entry name" value="39S RIBOSOMAL PROTEIN L20"/>
    <property type="match status" value="1"/>
</dbReference>
<dbReference type="Pfam" id="PF00453">
    <property type="entry name" value="Ribosomal_L20"/>
    <property type="match status" value="1"/>
</dbReference>
<dbReference type="PRINTS" id="PR00062">
    <property type="entry name" value="RIBOSOMALL20"/>
</dbReference>
<dbReference type="SUPFAM" id="SSF74731">
    <property type="entry name" value="Ribosomal protein L20"/>
    <property type="match status" value="1"/>
</dbReference>
<dbReference type="PROSITE" id="PS00937">
    <property type="entry name" value="RIBOSOMAL_L20"/>
    <property type="match status" value="1"/>
</dbReference>
<accession>A5D0U4</accession>
<reference key="1">
    <citation type="journal article" date="2008" name="Genome Res.">
        <title>The genome of Pelotomaculum thermopropionicum reveals niche-associated evolution in anaerobic microbiota.</title>
        <authorList>
            <person name="Kosaka T."/>
            <person name="Kato S."/>
            <person name="Shimoyama T."/>
            <person name="Ishii S."/>
            <person name="Abe T."/>
            <person name="Watanabe K."/>
        </authorList>
    </citation>
    <scope>NUCLEOTIDE SEQUENCE [LARGE SCALE GENOMIC DNA]</scope>
    <source>
        <strain>DSM 13744 / JCM 10971 / SI</strain>
    </source>
</reference>
<feature type="chain" id="PRO_1000080082" description="Large ribosomal subunit protein bL20">
    <location>
        <begin position="1"/>
        <end position="117"/>
    </location>
</feature>
<name>RL20_PELTS</name>
<proteinExistence type="inferred from homology"/>
<gene>
    <name evidence="1" type="primary">rplT</name>
    <name type="ordered locus">PTH_1953</name>
</gene>
<keyword id="KW-1185">Reference proteome</keyword>
<keyword id="KW-0687">Ribonucleoprotein</keyword>
<keyword id="KW-0689">Ribosomal protein</keyword>
<keyword id="KW-0694">RNA-binding</keyword>
<keyword id="KW-0699">rRNA-binding</keyword>